<name>RLMH_SHIDS</name>
<protein>
    <recommendedName>
        <fullName evidence="1">Ribosomal RNA large subunit methyltransferase H</fullName>
        <ecNumber evidence="1">2.1.1.177</ecNumber>
    </recommendedName>
    <alternativeName>
        <fullName evidence="1">23S rRNA (pseudouridine1915-N3)-methyltransferase</fullName>
    </alternativeName>
    <alternativeName>
        <fullName evidence="1">23S rRNA m3Psi1915 methyltransferase</fullName>
    </alternativeName>
    <alternativeName>
        <fullName evidence="1">rRNA (pseudouridine-N3-)-methyltransferase RlmH</fullName>
    </alternativeName>
</protein>
<sequence>MKLQLVAVGTKMPDWVQTGFTEYLRRFPKDMPFELIEIPAGKRGKNADIKRILDKEGEQMLAAAGKNRIVTLDIPGKPWDTPQLAAELERWKLDGRDVSLLIGGPEGLSPACKAAAEQSWSLSALTLPHPLVRVLVAESLYRAWSITTNHPYHRE</sequence>
<reference key="1">
    <citation type="journal article" date="2005" name="Nucleic Acids Res.">
        <title>Genome dynamics and diversity of Shigella species, the etiologic agents of bacillary dysentery.</title>
        <authorList>
            <person name="Yang F."/>
            <person name="Yang J."/>
            <person name="Zhang X."/>
            <person name="Chen L."/>
            <person name="Jiang Y."/>
            <person name="Yan Y."/>
            <person name="Tang X."/>
            <person name="Wang J."/>
            <person name="Xiong Z."/>
            <person name="Dong J."/>
            <person name="Xue Y."/>
            <person name="Zhu Y."/>
            <person name="Xu X."/>
            <person name="Sun L."/>
            <person name="Chen S."/>
            <person name="Nie H."/>
            <person name="Peng J."/>
            <person name="Xu J."/>
            <person name="Wang Y."/>
            <person name="Yuan Z."/>
            <person name="Wen Y."/>
            <person name="Yao Z."/>
            <person name="Shen Y."/>
            <person name="Qiang B."/>
            <person name="Hou Y."/>
            <person name="Yu J."/>
            <person name="Jin Q."/>
        </authorList>
    </citation>
    <scope>NUCLEOTIDE SEQUENCE [LARGE SCALE GENOMIC DNA]</scope>
    <source>
        <strain>Sd197</strain>
    </source>
</reference>
<feature type="chain" id="PRO_0000260609" description="Ribosomal RNA large subunit methyltransferase H">
    <location>
        <begin position="1"/>
        <end position="155"/>
    </location>
</feature>
<feature type="binding site" evidence="1">
    <location>
        <position position="72"/>
    </location>
    <ligand>
        <name>S-adenosyl-L-methionine</name>
        <dbReference type="ChEBI" id="CHEBI:59789"/>
    </ligand>
</feature>
<feature type="binding site" evidence="1">
    <location>
        <position position="103"/>
    </location>
    <ligand>
        <name>S-adenosyl-L-methionine</name>
        <dbReference type="ChEBI" id="CHEBI:59789"/>
    </ligand>
</feature>
<feature type="binding site" evidence="1">
    <location>
        <begin position="122"/>
        <end position="127"/>
    </location>
    <ligand>
        <name>S-adenosyl-L-methionine</name>
        <dbReference type="ChEBI" id="CHEBI:59789"/>
    </ligand>
</feature>
<keyword id="KW-0963">Cytoplasm</keyword>
<keyword id="KW-0489">Methyltransferase</keyword>
<keyword id="KW-1185">Reference proteome</keyword>
<keyword id="KW-0698">rRNA processing</keyword>
<keyword id="KW-0949">S-adenosyl-L-methionine</keyword>
<keyword id="KW-0808">Transferase</keyword>
<organism>
    <name type="scientific">Shigella dysenteriae serotype 1 (strain Sd197)</name>
    <dbReference type="NCBI Taxonomy" id="300267"/>
    <lineage>
        <taxon>Bacteria</taxon>
        <taxon>Pseudomonadati</taxon>
        <taxon>Pseudomonadota</taxon>
        <taxon>Gammaproteobacteria</taxon>
        <taxon>Enterobacterales</taxon>
        <taxon>Enterobacteriaceae</taxon>
        <taxon>Shigella</taxon>
    </lineage>
</organism>
<accession>Q32IU4</accession>
<dbReference type="EC" id="2.1.1.177" evidence="1"/>
<dbReference type="EMBL" id="CP000034">
    <property type="protein sequence ID" value="ABB60763.1"/>
    <property type="molecule type" value="Genomic_DNA"/>
</dbReference>
<dbReference type="RefSeq" id="WP_000776104.1">
    <property type="nucleotide sequence ID" value="NC_007606.1"/>
</dbReference>
<dbReference type="RefSeq" id="YP_402252.1">
    <property type="nucleotide sequence ID" value="NC_007606.1"/>
</dbReference>
<dbReference type="SMR" id="Q32IU4"/>
<dbReference type="STRING" id="300267.SDY_0558"/>
<dbReference type="EnsemblBacteria" id="ABB60763">
    <property type="protein sequence ID" value="ABB60763"/>
    <property type="gene ID" value="SDY_0558"/>
</dbReference>
<dbReference type="GeneID" id="93776846"/>
<dbReference type="KEGG" id="sdy:SDY_0558"/>
<dbReference type="PATRIC" id="fig|300267.13.peg.660"/>
<dbReference type="HOGENOM" id="CLU_100552_1_0_6"/>
<dbReference type="Proteomes" id="UP000002716">
    <property type="component" value="Chromosome"/>
</dbReference>
<dbReference type="GO" id="GO:0005737">
    <property type="term" value="C:cytoplasm"/>
    <property type="evidence" value="ECO:0007669"/>
    <property type="project" value="UniProtKB-SubCell"/>
</dbReference>
<dbReference type="GO" id="GO:0070038">
    <property type="term" value="F:rRNA (pseudouridine-N3-)-methyltransferase activity"/>
    <property type="evidence" value="ECO:0007669"/>
    <property type="project" value="UniProtKB-UniRule"/>
</dbReference>
<dbReference type="CDD" id="cd18081">
    <property type="entry name" value="RlmH-like"/>
    <property type="match status" value="1"/>
</dbReference>
<dbReference type="FunFam" id="3.40.1280.10:FF:000004">
    <property type="entry name" value="Ribosomal RNA large subunit methyltransferase H"/>
    <property type="match status" value="1"/>
</dbReference>
<dbReference type="Gene3D" id="3.40.1280.10">
    <property type="match status" value="1"/>
</dbReference>
<dbReference type="HAMAP" id="MF_00658">
    <property type="entry name" value="23SrRNA_methyltr_H"/>
    <property type="match status" value="1"/>
</dbReference>
<dbReference type="InterPro" id="IPR029028">
    <property type="entry name" value="Alpha/beta_knot_MTases"/>
</dbReference>
<dbReference type="InterPro" id="IPR003742">
    <property type="entry name" value="RlmH-like"/>
</dbReference>
<dbReference type="InterPro" id="IPR029026">
    <property type="entry name" value="tRNA_m1G_MTases_N"/>
</dbReference>
<dbReference type="NCBIfam" id="NF000984">
    <property type="entry name" value="PRK00103.1-1"/>
    <property type="match status" value="1"/>
</dbReference>
<dbReference type="NCBIfam" id="NF000986">
    <property type="entry name" value="PRK00103.1-4"/>
    <property type="match status" value="1"/>
</dbReference>
<dbReference type="NCBIfam" id="TIGR00246">
    <property type="entry name" value="tRNA_RlmH_YbeA"/>
    <property type="match status" value="1"/>
</dbReference>
<dbReference type="PANTHER" id="PTHR33603">
    <property type="entry name" value="METHYLTRANSFERASE"/>
    <property type="match status" value="1"/>
</dbReference>
<dbReference type="PANTHER" id="PTHR33603:SF1">
    <property type="entry name" value="RIBOSOMAL RNA LARGE SUBUNIT METHYLTRANSFERASE H"/>
    <property type="match status" value="1"/>
</dbReference>
<dbReference type="Pfam" id="PF02590">
    <property type="entry name" value="SPOUT_MTase"/>
    <property type="match status" value="1"/>
</dbReference>
<dbReference type="PIRSF" id="PIRSF004505">
    <property type="entry name" value="MT_bac"/>
    <property type="match status" value="1"/>
</dbReference>
<dbReference type="SUPFAM" id="SSF75217">
    <property type="entry name" value="alpha/beta knot"/>
    <property type="match status" value="1"/>
</dbReference>
<gene>
    <name evidence="1" type="primary">rlmH</name>
    <name type="ordered locus">SDY_0558</name>
</gene>
<comment type="function">
    <text evidence="1">Specifically methylates the pseudouridine at position 1915 (m3Psi1915) in 23S rRNA.</text>
</comment>
<comment type="catalytic activity">
    <reaction evidence="1">
        <text>pseudouridine(1915) in 23S rRNA + S-adenosyl-L-methionine = N(3)-methylpseudouridine(1915) in 23S rRNA + S-adenosyl-L-homocysteine + H(+)</text>
        <dbReference type="Rhea" id="RHEA:42752"/>
        <dbReference type="Rhea" id="RHEA-COMP:10221"/>
        <dbReference type="Rhea" id="RHEA-COMP:10222"/>
        <dbReference type="ChEBI" id="CHEBI:15378"/>
        <dbReference type="ChEBI" id="CHEBI:57856"/>
        <dbReference type="ChEBI" id="CHEBI:59789"/>
        <dbReference type="ChEBI" id="CHEBI:65314"/>
        <dbReference type="ChEBI" id="CHEBI:74486"/>
        <dbReference type="EC" id="2.1.1.177"/>
    </reaction>
</comment>
<comment type="subunit">
    <text evidence="1">Homodimer.</text>
</comment>
<comment type="subcellular location">
    <subcellularLocation>
        <location evidence="1">Cytoplasm</location>
    </subcellularLocation>
</comment>
<comment type="similarity">
    <text evidence="1">Belongs to the RNA methyltransferase RlmH family.</text>
</comment>
<evidence type="ECO:0000255" key="1">
    <source>
        <dbReference type="HAMAP-Rule" id="MF_00658"/>
    </source>
</evidence>
<proteinExistence type="inferred from homology"/>